<protein>
    <recommendedName>
        <fullName evidence="1">Malonyl-[acyl-carrier protein] O-methyltransferase 2</fullName>
        <shortName evidence="1">Malonyl-ACP O-methyltransferase 2</shortName>
        <ecNumber evidence="1">2.1.1.197</ecNumber>
    </recommendedName>
    <alternativeName>
        <fullName evidence="1">Biotin synthesis protein BioC 2</fullName>
    </alternativeName>
</protein>
<feature type="chain" id="PRO_0000412492" description="Malonyl-[acyl-carrier protein] O-methyltransferase 2">
    <location>
        <begin position="1"/>
        <end position="248"/>
    </location>
</feature>
<sequence length="248" mass="28207">MMVNSLKKRIQRSFNKAFDTYDDHASIQREICKQLLKPLKEMRIQTKIIADFACGTGISTKAVADSFPYQNLYAIDFCEKLLIQAKSKLKESNVEFILADFETNVFLCNSLDLIFCNMGFQWALDLKQTFFSLFSQLKAFGVLAFSVPLLGTFCELRNDCRNPFLTLQSIVQLLKAVGFELLTADEKIFTDSFESPLDAIRSIKSIGANCLLYPKRNKGLSPMPIEKNNTDTTLTYHIGFFIAKKIIQ</sequence>
<organism>
    <name type="scientific">Coxiella burnetii (strain RSA 493 / Nine Mile phase I)</name>
    <dbReference type="NCBI Taxonomy" id="227377"/>
    <lineage>
        <taxon>Bacteria</taxon>
        <taxon>Pseudomonadati</taxon>
        <taxon>Pseudomonadota</taxon>
        <taxon>Gammaproteobacteria</taxon>
        <taxon>Legionellales</taxon>
        <taxon>Coxiellaceae</taxon>
        <taxon>Coxiella</taxon>
    </lineage>
</organism>
<dbReference type="EC" id="2.1.1.197" evidence="1"/>
<dbReference type="EMBL" id="AE016828">
    <property type="protein sequence ID" value="AAO90525.1"/>
    <property type="molecule type" value="Genomic_DNA"/>
</dbReference>
<dbReference type="SMR" id="Q83CU8"/>
<dbReference type="STRING" id="227377.CBU_1004"/>
<dbReference type="EnsemblBacteria" id="AAO90525">
    <property type="protein sequence ID" value="AAO90525"/>
    <property type="gene ID" value="CBU_1004"/>
</dbReference>
<dbReference type="KEGG" id="cbu:CBU_1004"/>
<dbReference type="PATRIC" id="fig|227377.7.peg.997"/>
<dbReference type="eggNOG" id="COG2226">
    <property type="taxonomic scope" value="Bacteria"/>
</dbReference>
<dbReference type="HOGENOM" id="CLU_046586_2_3_6"/>
<dbReference type="OrthoDB" id="9760689at2"/>
<dbReference type="UniPathway" id="UPA00078"/>
<dbReference type="Proteomes" id="UP000002671">
    <property type="component" value="Chromosome"/>
</dbReference>
<dbReference type="GO" id="GO:0010340">
    <property type="term" value="F:carboxyl-O-methyltransferase activity"/>
    <property type="evidence" value="ECO:0007669"/>
    <property type="project" value="UniProtKB-UniRule"/>
</dbReference>
<dbReference type="GO" id="GO:0102130">
    <property type="term" value="F:malonyl-CoA methyltransferase activity"/>
    <property type="evidence" value="ECO:0007669"/>
    <property type="project" value="UniProtKB-EC"/>
</dbReference>
<dbReference type="GO" id="GO:0009102">
    <property type="term" value="P:biotin biosynthetic process"/>
    <property type="evidence" value="ECO:0007669"/>
    <property type="project" value="UniProtKB-UniRule"/>
</dbReference>
<dbReference type="GO" id="GO:0032259">
    <property type="term" value="P:methylation"/>
    <property type="evidence" value="ECO:0007669"/>
    <property type="project" value="UniProtKB-KW"/>
</dbReference>
<dbReference type="CDD" id="cd02440">
    <property type="entry name" value="AdoMet_MTases"/>
    <property type="match status" value="1"/>
</dbReference>
<dbReference type="Gene3D" id="3.40.50.150">
    <property type="entry name" value="Vaccinia Virus protein VP39"/>
    <property type="match status" value="1"/>
</dbReference>
<dbReference type="HAMAP" id="MF_00835">
    <property type="entry name" value="BioC"/>
    <property type="match status" value="1"/>
</dbReference>
<dbReference type="InterPro" id="IPR011814">
    <property type="entry name" value="BioC"/>
</dbReference>
<dbReference type="InterPro" id="IPR050602">
    <property type="entry name" value="Malonyl-ACP_OMT"/>
</dbReference>
<dbReference type="InterPro" id="IPR041698">
    <property type="entry name" value="Methyltransf_25"/>
</dbReference>
<dbReference type="InterPro" id="IPR029063">
    <property type="entry name" value="SAM-dependent_MTases_sf"/>
</dbReference>
<dbReference type="NCBIfam" id="TIGR02072">
    <property type="entry name" value="BioC"/>
    <property type="match status" value="1"/>
</dbReference>
<dbReference type="PANTHER" id="PTHR13090">
    <property type="entry name" value="ARGININE-HYDROXYLASE NDUFAF5, MITOCHONDRIAL"/>
    <property type="match status" value="1"/>
</dbReference>
<dbReference type="PANTHER" id="PTHR13090:SF1">
    <property type="entry name" value="ARGININE-HYDROXYLASE NDUFAF5, MITOCHONDRIAL"/>
    <property type="match status" value="1"/>
</dbReference>
<dbReference type="Pfam" id="PF13649">
    <property type="entry name" value="Methyltransf_25"/>
    <property type="match status" value="1"/>
</dbReference>
<dbReference type="SUPFAM" id="SSF53335">
    <property type="entry name" value="S-adenosyl-L-methionine-dependent methyltransferases"/>
    <property type="match status" value="1"/>
</dbReference>
<comment type="function">
    <text evidence="1">Converts the free carboxyl group of a malonyl-thioester to its methyl ester by transfer of a methyl group from S-adenosyl-L-methionine (SAM). It allows to synthesize pimeloyl-ACP via the fatty acid synthetic pathway.</text>
</comment>
<comment type="catalytic activity">
    <reaction evidence="1">
        <text>malonyl-[ACP] + S-adenosyl-L-methionine = malonyl-[ACP] methyl ester + S-adenosyl-L-homocysteine</text>
        <dbReference type="Rhea" id="RHEA:17105"/>
        <dbReference type="Rhea" id="RHEA-COMP:9623"/>
        <dbReference type="Rhea" id="RHEA-COMP:9954"/>
        <dbReference type="ChEBI" id="CHEBI:57856"/>
        <dbReference type="ChEBI" id="CHEBI:59789"/>
        <dbReference type="ChEBI" id="CHEBI:78449"/>
        <dbReference type="ChEBI" id="CHEBI:78845"/>
        <dbReference type="EC" id="2.1.1.197"/>
    </reaction>
</comment>
<comment type="pathway">
    <text evidence="1">Cofactor biosynthesis; biotin biosynthesis.</text>
</comment>
<comment type="similarity">
    <text evidence="1">Belongs to the methyltransferase superfamily.</text>
</comment>
<evidence type="ECO:0000255" key="1">
    <source>
        <dbReference type="HAMAP-Rule" id="MF_00835"/>
    </source>
</evidence>
<gene>
    <name evidence="1" type="primary">bioC2</name>
    <name type="ordered locus">CBU_1004</name>
</gene>
<proteinExistence type="inferred from homology"/>
<reference key="1">
    <citation type="journal article" date="2003" name="Proc. Natl. Acad. Sci. U.S.A.">
        <title>Complete genome sequence of the Q-fever pathogen, Coxiella burnetii.</title>
        <authorList>
            <person name="Seshadri R."/>
            <person name="Paulsen I.T."/>
            <person name="Eisen J.A."/>
            <person name="Read T.D."/>
            <person name="Nelson K.E."/>
            <person name="Nelson W.C."/>
            <person name="Ward N.L."/>
            <person name="Tettelin H."/>
            <person name="Davidsen T.M."/>
            <person name="Beanan M.J."/>
            <person name="DeBoy R.T."/>
            <person name="Daugherty S.C."/>
            <person name="Brinkac L.M."/>
            <person name="Madupu R."/>
            <person name="Dodson R.J."/>
            <person name="Khouri H.M."/>
            <person name="Lee K.H."/>
            <person name="Carty H.A."/>
            <person name="Scanlan D."/>
            <person name="Heinzen R.A."/>
            <person name="Thompson H.A."/>
            <person name="Samuel J.E."/>
            <person name="Fraser C.M."/>
            <person name="Heidelberg J.F."/>
        </authorList>
    </citation>
    <scope>NUCLEOTIDE SEQUENCE [LARGE SCALE GENOMIC DNA]</scope>
    <source>
        <strain>RSA 493 / Nine Mile phase I</strain>
    </source>
</reference>
<keyword id="KW-0093">Biotin biosynthesis</keyword>
<keyword id="KW-0489">Methyltransferase</keyword>
<keyword id="KW-1185">Reference proteome</keyword>
<keyword id="KW-0949">S-adenosyl-L-methionine</keyword>
<keyword id="KW-0808">Transferase</keyword>
<accession>Q83CU8</accession>
<name>BIOC2_COXBU</name>